<protein>
    <recommendedName>
        <fullName>Fermitin family homolog 3</fullName>
    </recommendedName>
    <alternativeName>
        <fullName>Kindlin-3</fullName>
    </alternativeName>
    <alternativeName>
        <fullName>MIG2-like protein</fullName>
    </alternativeName>
    <alternativeName>
        <fullName>Unc-112-related protein 2</fullName>
    </alternativeName>
</protein>
<gene>
    <name type="primary">FERMT3</name>
    <name type="synonym">KIND3</name>
    <name type="synonym">MIG2B</name>
    <name type="synonym">URP2</name>
</gene>
<sequence length="667" mass="75953">MAGMKTASGDYIDSSWELRVFVGEEDPEAESVTLRVTGESHIGGVLLKIVEQINRKQDWSDHAIWWEQKRQWLLQTHWTLDKYGILADARLFFGPQHRPVILRLPNRRALRLRASFSQPLFQAVAAICRLLSIRHPEELSLLRAPEKKEKKKKEKEPEEELYDLSKVVLAGGVAPALFRGMPAHFSDSAQTEACYHMLSRPQPPPDPLLLQRLPRPSSLSDKTQLHSRWLDSSRCLMQQGIKAGDALWLRFKYYSFFDLDPKTDPVRLTQLYEQARWDLLLEEIDCTEEEMMVFAALQYHINKLSQSGEVGEPAGTDPGLDDLDVALSNLEVKLEGSAPTDVLDSLTTIPELKDHLRIFRIPRRPRKLTLKGYRQHWVVFKETTLSYYKSQDEAPGDPIQQLNLKGCEVVPDVNVSGQKFCIKLLVPSPEGMSEIYLRCQDEQQYARWMAGCRLASKGRTMADSSYTSEVQAILAFLSLQRTGSGGPGNHPHGPDASAEGLNPYGLVAPRFQRKFKAKQLTPRILEAHQNVAQLSLAEAQLRFIQAWQSLPDFGISYVMVRFKGSRKDEILGIANNRLIRIDLAVGDVVKTWRFSNMRQWNVNWDIRQVAIEFDEHINVAFSCVSASCRIVHEYIGGYIFLSTRERARGEELDEDLFLQLTGGHEAF</sequence>
<proteinExistence type="evidence at protein level"/>
<feature type="chain" id="PRO_0000219454" description="Fermitin family homolog 3">
    <location>
        <begin position="1"/>
        <end position="667"/>
    </location>
</feature>
<feature type="domain" description="FERM">
    <location>
        <begin position="229"/>
        <end position="558"/>
    </location>
</feature>
<feature type="domain" description="PH" evidence="3">
    <location>
        <begin position="354"/>
        <end position="457"/>
    </location>
</feature>
<feature type="modified residue" description="Phosphoserine" evidence="18">
    <location>
        <position position="8"/>
    </location>
</feature>
<feature type="modified residue" description="Phosphotyrosine" evidence="16 17">
    <location>
        <position position="11"/>
    </location>
</feature>
<feature type="modified residue" description="Phosphotyrosine" evidence="17">
    <location>
        <position position="504"/>
    </location>
</feature>
<feature type="modified residue" description="Phosphothreonine" evidence="18">
    <location>
        <position position="591"/>
    </location>
</feature>
<feature type="splice variant" id="VSP_009226" description="In isoform 2." evidence="12 13 14">
    <location>
        <begin position="360"/>
        <end position="363"/>
    </location>
</feature>
<feature type="sequence variant" id="VAR_074597" description="In LAD3; uncertain significance; decreases cell adhesion in hematopoietic cells; requires 2 nucleotide substitutions." evidence="11">
    <original>Q</original>
    <variation>S</variation>
    <location>
        <position position="599"/>
    </location>
</feature>
<feature type="sequence conflict" description="In Ref. 2; BAC04220." evidence="15" ref="2">
    <original>A</original>
    <variation>P</variation>
    <location>
        <position position="472"/>
    </location>
</feature>
<feature type="sequence conflict" description="In Ref. 2; BAC04220." evidence="15" ref="2">
    <original>Q</original>
    <variation>R</variation>
    <location>
        <position position="480"/>
    </location>
</feature>
<feature type="strand" evidence="20">
    <location>
        <begin position="16"/>
        <end position="21"/>
    </location>
</feature>
<feature type="strand" evidence="20">
    <location>
        <begin position="24"/>
        <end position="26"/>
    </location>
</feature>
<feature type="strand" evidence="20">
    <location>
        <begin position="29"/>
        <end position="36"/>
    </location>
</feature>
<feature type="helix" evidence="20">
    <location>
        <begin position="42"/>
        <end position="51"/>
    </location>
</feature>
<feature type="strand" evidence="20">
    <location>
        <begin position="62"/>
        <end position="66"/>
    </location>
</feature>
<feature type="turn" evidence="20">
    <location>
        <begin position="67"/>
        <end position="70"/>
    </location>
</feature>
<feature type="helix" evidence="20">
    <location>
        <begin position="80"/>
        <end position="83"/>
    </location>
</feature>
<feature type="strand" evidence="20">
    <location>
        <begin position="91"/>
        <end position="103"/>
    </location>
</feature>
<feature type="strand" evidence="20">
    <location>
        <begin position="109"/>
        <end position="118"/>
    </location>
</feature>
<feature type="helix" evidence="20">
    <location>
        <begin position="120"/>
        <end position="130"/>
    </location>
</feature>
<feature type="helix" evidence="20">
    <location>
        <begin position="136"/>
        <end position="138"/>
    </location>
</feature>
<feature type="strand" evidence="20">
    <location>
        <begin position="139"/>
        <end position="142"/>
    </location>
</feature>
<feature type="helix" evidence="20">
    <location>
        <begin position="195"/>
        <end position="199"/>
    </location>
</feature>
<feature type="helix" evidence="20">
    <location>
        <begin position="207"/>
        <end position="212"/>
    </location>
</feature>
<feature type="helix" evidence="20">
    <location>
        <begin position="220"/>
        <end position="228"/>
    </location>
</feature>
<feature type="helix" evidence="20">
    <location>
        <begin position="237"/>
        <end position="239"/>
    </location>
</feature>
<feature type="strand" evidence="20">
    <location>
        <begin position="246"/>
        <end position="251"/>
    </location>
</feature>
<feature type="turn" evidence="20">
    <location>
        <begin position="261"/>
        <end position="263"/>
    </location>
</feature>
<feature type="helix" evidence="20">
    <location>
        <begin position="265"/>
        <end position="280"/>
    </location>
</feature>
<feature type="helix" evidence="20">
    <location>
        <begin position="288"/>
        <end position="306"/>
    </location>
</feature>
<feature type="strand" evidence="19">
    <location>
        <begin position="370"/>
        <end position="373"/>
    </location>
</feature>
<feature type="strand" evidence="19">
    <location>
        <begin position="377"/>
        <end position="380"/>
    </location>
</feature>
<feature type="strand" evidence="19">
    <location>
        <begin position="385"/>
        <end position="390"/>
    </location>
</feature>
<feature type="turn" evidence="19">
    <location>
        <begin position="391"/>
        <end position="395"/>
    </location>
</feature>
<feature type="turn" evidence="19">
    <location>
        <begin position="404"/>
        <end position="406"/>
    </location>
</feature>
<feature type="strand" evidence="19">
    <location>
        <begin position="408"/>
        <end position="411"/>
    </location>
</feature>
<feature type="helix" evidence="19">
    <location>
        <begin position="415"/>
        <end position="417"/>
    </location>
</feature>
<feature type="strand" evidence="19">
    <location>
        <begin position="419"/>
        <end position="427"/>
    </location>
</feature>
<feature type="strand" evidence="19">
    <location>
        <begin position="429"/>
        <end position="441"/>
    </location>
</feature>
<feature type="helix" evidence="19">
    <location>
        <begin position="442"/>
        <end position="456"/>
    </location>
</feature>
<feature type="helix" evidence="19">
    <location>
        <begin position="465"/>
        <end position="480"/>
    </location>
</feature>
<feature type="helix" evidence="20">
    <location>
        <begin position="503"/>
        <end position="505"/>
    </location>
</feature>
<feature type="helix" evidence="20">
    <location>
        <begin position="509"/>
        <end position="514"/>
    </location>
</feature>
<feature type="helix" evidence="20">
    <location>
        <begin position="517"/>
        <end position="529"/>
    </location>
</feature>
<feature type="turn" evidence="20">
    <location>
        <begin position="530"/>
        <end position="533"/>
    </location>
</feature>
<feature type="helix" evidence="20">
    <location>
        <begin position="536"/>
        <end position="548"/>
    </location>
</feature>
<feature type="turn" evidence="20">
    <location>
        <begin position="551"/>
        <end position="554"/>
    </location>
</feature>
<feature type="strand" evidence="20">
    <location>
        <begin position="556"/>
        <end position="562"/>
    </location>
</feature>
<feature type="strand" evidence="20">
    <location>
        <begin position="569"/>
        <end position="573"/>
    </location>
</feature>
<feature type="strand" evidence="20">
    <location>
        <begin position="575"/>
        <end position="581"/>
    </location>
</feature>
<feature type="turn" evidence="20">
    <location>
        <begin position="583"/>
        <end position="585"/>
    </location>
</feature>
<feature type="strand" evidence="20">
    <location>
        <begin position="587"/>
        <end position="593"/>
    </location>
</feature>
<feature type="helix" evidence="20">
    <location>
        <begin position="594"/>
        <end position="596"/>
    </location>
</feature>
<feature type="strand" evidence="20">
    <location>
        <begin position="597"/>
        <end position="603"/>
    </location>
</feature>
<feature type="turn" evidence="20">
    <location>
        <begin position="604"/>
        <end position="607"/>
    </location>
</feature>
<feature type="strand" evidence="20">
    <location>
        <begin position="608"/>
        <end position="613"/>
    </location>
</feature>
<feature type="turn" evidence="20">
    <location>
        <begin position="614"/>
        <end position="616"/>
    </location>
</feature>
<feature type="strand" evidence="20">
    <location>
        <begin position="617"/>
        <end position="626"/>
    </location>
</feature>
<feature type="helix" evidence="20">
    <location>
        <begin position="628"/>
        <end position="641"/>
    </location>
</feature>
<feature type="turn" evidence="20">
    <location>
        <begin position="642"/>
        <end position="645"/>
    </location>
</feature>
<feature type="turn" evidence="20">
    <location>
        <begin position="647"/>
        <end position="649"/>
    </location>
</feature>
<feature type="helix" evidence="20">
    <location>
        <begin position="654"/>
        <end position="660"/>
    </location>
</feature>
<dbReference type="EMBL" id="AY093951">
    <property type="protein sequence ID" value="AAM19736.1"/>
    <property type="molecule type" value="mRNA"/>
</dbReference>
<dbReference type="EMBL" id="AY093952">
    <property type="protein sequence ID" value="AAM19737.1"/>
    <property type="molecule type" value="mRNA"/>
</dbReference>
<dbReference type="EMBL" id="AK093719">
    <property type="protein sequence ID" value="BAC04220.1"/>
    <property type="molecule type" value="mRNA"/>
</dbReference>
<dbReference type="EMBL" id="BC004347">
    <property type="protein sequence ID" value="AAH04347.2"/>
    <property type="molecule type" value="mRNA"/>
</dbReference>
<dbReference type="EMBL" id="BC013366">
    <property type="protein sequence ID" value="AAH13366.1"/>
    <property type="molecule type" value="mRNA"/>
</dbReference>
<dbReference type="EMBL" id="BC015584">
    <property type="protein sequence ID" value="AAH15584.1"/>
    <property type="molecule type" value="mRNA"/>
</dbReference>
<dbReference type="CCDS" id="CCDS8059.1">
    <molecule id="Q86UX7-2"/>
</dbReference>
<dbReference type="CCDS" id="CCDS8060.1">
    <molecule id="Q86UX7-1"/>
</dbReference>
<dbReference type="RefSeq" id="NP_001369290.1">
    <molecule id="Q86UX7-2"/>
    <property type="nucleotide sequence ID" value="NM_001382361.1"/>
</dbReference>
<dbReference type="RefSeq" id="NP_001369291.1">
    <molecule id="Q86UX7-1"/>
    <property type="nucleotide sequence ID" value="NM_001382362.1"/>
</dbReference>
<dbReference type="RefSeq" id="NP_001369377.1">
    <molecule id="Q86UX7-2"/>
    <property type="nucleotide sequence ID" value="NM_001382448.1"/>
</dbReference>
<dbReference type="RefSeq" id="NP_113659.3">
    <molecule id="Q86UX7-2"/>
    <property type="nucleotide sequence ID" value="NM_031471.5"/>
</dbReference>
<dbReference type="RefSeq" id="NP_848537.1">
    <molecule id="Q86UX7-1"/>
    <property type="nucleotide sequence ID" value="NM_178443.3"/>
</dbReference>
<dbReference type="RefSeq" id="XP_011543596.1">
    <property type="nucleotide sequence ID" value="XM_011545294.2"/>
</dbReference>
<dbReference type="RefSeq" id="XP_016873887.1">
    <property type="nucleotide sequence ID" value="XM_017018398.1"/>
</dbReference>
<dbReference type="PDB" id="2YS3">
    <property type="method" value="NMR"/>
    <property type="chains" value="A=349-482"/>
</dbReference>
<dbReference type="PDB" id="6V97">
    <property type="method" value="X-ray"/>
    <property type="resolution" value="2.38 A"/>
    <property type="chains" value="A/B=1-667"/>
</dbReference>
<dbReference type="PDB" id="6V9G">
    <property type="method" value="X-ray"/>
    <property type="resolution" value="2.35 A"/>
    <property type="chains" value="A/B=1-667"/>
</dbReference>
<dbReference type="PDB" id="7C3M">
    <property type="method" value="X-ray"/>
    <property type="resolution" value="3.60 A"/>
    <property type="chains" value="A/B/C=1-667"/>
</dbReference>
<dbReference type="PDBsum" id="2YS3"/>
<dbReference type="PDBsum" id="6V97"/>
<dbReference type="PDBsum" id="6V9G"/>
<dbReference type="PDBsum" id="7C3M"/>
<dbReference type="SMR" id="Q86UX7"/>
<dbReference type="BioGRID" id="123735">
    <property type="interactions" value="65"/>
</dbReference>
<dbReference type="CORUM" id="Q86UX7"/>
<dbReference type="FunCoup" id="Q86UX7">
    <property type="interactions" value="290"/>
</dbReference>
<dbReference type="IntAct" id="Q86UX7">
    <property type="interactions" value="44"/>
</dbReference>
<dbReference type="MINT" id="Q86UX7"/>
<dbReference type="STRING" id="9606.ENSP00000279227"/>
<dbReference type="iPTMnet" id="Q86UX7"/>
<dbReference type="PhosphoSitePlus" id="Q86UX7"/>
<dbReference type="BioMuta" id="FERMT3"/>
<dbReference type="DMDM" id="41018464"/>
<dbReference type="jPOST" id="Q86UX7"/>
<dbReference type="MassIVE" id="Q86UX7"/>
<dbReference type="PaxDb" id="9606-ENSP00000279227"/>
<dbReference type="PeptideAtlas" id="Q86UX7"/>
<dbReference type="PRIDE" id="Q86UX7"/>
<dbReference type="ProteomicsDB" id="69932">
    <molecule id="Q86UX7-1"/>
</dbReference>
<dbReference type="ProteomicsDB" id="69933">
    <molecule id="Q86UX7-2"/>
</dbReference>
<dbReference type="Pumba" id="Q86UX7"/>
<dbReference type="Antibodypedia" id="29146">
    <property type="antibodies" value="273 antibodies from 36 providers"/>
</dbReference>
<dbReference type="DNASU" id="83706"/>
<dbReference type="Ensembl" id="ENST00000279227.10">
    <molecule id="Q86UX7-1"/>
    <property type="protein sequence ID" value="ENSP00000279227.5"/>
    <property type="gene ID" value="ENSG00000149781.14"/>
</dbReference>
<dbReference type="Ensembl" id="ENST00000345728.10">
    <molecule id="Q86UX7-2"/>
    <property type="protein sequence ID" value="ENSP00000339950.5"/>
    <property type="gene ID" value="ENSG00000149781.14"/>
</dbReference>
<dbReference type="Ensembl" id="ENST00000544997.6">
    <molecule id="Q86UX7-2"/>
    <property type="protein sequence ID" value="ENSP00000445778.2"/>
    <property type="gene ID" value="ENSG00000149781.14"/>
</dbReference>
<dbReference type="Ensembl" id="ENST00000698852.1">
    <molecule id="Q86UX7-2"/>
    <property type="protein sequence ID" value="ENSP00000513984.1"/>
    <property type="gene ID" value="ENSG00000149781.14"/>
</dbReference>
<dbReference type="Ensembl" id="ENST00000698860.1">
    <molecule id="Q86UX7-1"/>
    <property type="protein sequence ID" value="ENSP00000513988.1"/>
    <property type="gene ID" value="ENSG00000149781.14"/>
</dbReference>
<dbReference type="Ensembl" id="ENST00000698861.1">
    <molecule id="Q86UX7-2"/>
    <property type="protein sequence ID" value="ENSP00000513989.1"/>
    <property type="gene ID" value="ENSG00000149781.14"/>
</dbReference>
<dbReference type="Ensembl" id="ENST00000698863.1">
    <molecule id="Q86UX7-2"/>
    <property type="protein sequence ID" value="ENSP00000513991.1"/>
    <property type="gene ID" value="ENSG00000149781.14"/>
</dbReference>
<dbReference type="Ensembl" id="ENST00000698870.1">
    <molecule id="Q86UX7-2"/>
    <property type="protein sequence ID" value="ENSP00000513996.1"/>
    <property type="gene ID" value="ENSG00000149781.14"/>
</dbReference>
<dbReference type="GeneID" id="83706"/>
<dbReference type="KEGG" id="hsa:83706"/>
<dbReference type="MANE-Select" id="ENST00000345728.10">
    <molecule id="Q86UX7-2"/>
    <property type="protein sequence ID" value="ENSP00000339950.5"/>
    <property type="RefSeq nucleotide sequence ID" value="NM_031471.6"/>
    <property type="RefSeq protein sequence ID" value="NP_113659.3"/>
</dbReference>
<dbReference type="UCSC" id="uc001nyl.3">
    <molecule id="Q86UX7-1"/>
    <property type="organism name" value="human"/>
</dbReference>
<dbReference type="AGR" id="HGNC:23151"/>
<dbReference type="CTD" id="83706"/>
<dbReference type="DisGeNET" id="83706"/>
<dbReference type="GeneCards" id="FERMT3"/>
<dbReference type="HGNC" id="HGNC:23151">
    <property type="gene designation" value="FERMT3"/>
</dbReference>
<dbReference type="HPA" id="ENSG00000149781">
    <property type="expression patterns" value="Tissue enhanced (bone marrow, lymphoid tissue)"/>
</dbReference>
<dbReference type="MalaCards" id="FERMT3"/>
<dbReference type="MIM" id="607901">
    <property type="type" value="gene"/>
</dbReference>
<dbReference type="MIM" id="612840">
    <property type="type" value="phenotype"/>
</dbReference>
<dbReference type="neXtProt" id="NX_Q86UX7"/>
<dbReference type="OpenTargets" id="ENSG00000149781"/>
<dbReference type="Orphanet" id="99844">
    <property type="disease" value="Leukocyte adhesion deficiency type III"/>
</dbReference>
<dbReference type="PharmGKB" id="PA162388384"/>
<dbReference type="VEuPathDB" id="HostDB:ENSG00000149781"/>
<dbReference type="eggNOG" id="KOG3727">
    <property type="taxonomic scope" value="Eukaryota"/>
</dbReference>
<dbReference type="GeneTree" id="ENSGT00390000013444"/>
<dbReference type="HOGENOM" id="CLU_011611_0_0_1"/>
<dbReference type="InParanoid" id="Q86UX7"/>
<dbReference type="OMA" id="RWLLQTH"/>
<dbReference type="OrthoDB" id="10057618at2759"/>
<dbReference type="PAN-GO" id="Q86UX7">
    <property type="GO annotations" value="7 GO annotations based on evolutionary models"/>
</dbReference>
<dbReference type="PhylomeDB" id="Q86UX7"/>
<dbReference type="TreeFam" id="TF314677"/>
<dbReference type="PathwayCommons" id="Q86UX7"/>
<dbReference type="Reactome" id="R-HSA-114608">
    <property type="pathway name" value="Platelet degranulation"/>
</dbReference>
<dbReference type="SignaLink" id="Q86UX7"/>
<dbReference type="SIGNOR" id="Q86UX7"/>
<dbReference type="BioGRID-ORCS" id="83706">
    <property type="hits" value="32 hits in 1152 CRISPR screens"/>
</dbReference>
<dbReference type="ChiTaRS" id="FERMT3">
    <property type="organism name" value="human"/>
</dbReference>
<dbReference type="EvolutionaryTrace" id="Q86UX7"/>
<dbReference type="GeneWiki" id="FERMT3"/>
<dbReference type="GenomeRNAi" id="83706"/>
<dbReference type="Pharos" id="Q86UX7">
    <property type="development level" value="Tbio"/>
</dbReference>
<dbReference type="PRO" id="PR:Q86UX7"/>
<dbReference type="Proteomes" id="UP000005640">
    <property type="component" value="Chromosome 11"/>
</dbReference>
<dbReference type="RNAct" id="Q86UX7">
    <property type="molecule type" value="protein"/>
</dbReference>
<dbReference type="Bgee" id="ENSG00000149781">
    <property type="expression patterns" value="Expressed in granulocyte and 121 other cell types or tissues"/>
</dbReference>
<dbReference type="ExpressionAtlas" id="Q86UX7">
    <property type="expression patterns" value="baseline and differential"/>
</dbReference>
<dbReference type="GO" id="GO:0042995">
    <property type="term" value="C:cell projection"/>
    <property type="evidence" value="ECO:0007669"/>
    <property type="project" value="UniProtKB-KW"/>
</dbReference>
<dbReference type="GO" id="GO:0030055">
    <property type="term" value="C:cell-substrate junction"/>
    <property type="evidence" value="ECO:0000318"/>
    <property type="project" value="GO_Central"/>
</dbReference>
<dbReference type="GO" id="GO:0070062">
    <property type="term" value="C:extracellular exosome"/>
    <property type="evidence" value="ECO:0007005"/>
    <property type="project" value="UniProtKB"/>
</dbReference>
<dbReference type="GO" id="GO:0005576">
    <property type="term" value="C:extracellular region"/>
    <property type="evidence" value="ECO:0000304"/>
    <property type="project" value="Reactome"/>
</dbReference>
<dbReference type="GO" id="GO:0016020">
    <property type="term" value="C:membrane"/>
    <property type="evidence" value="ECO:0007005"/>
    <property type="project" value="UniProtKB"/>
</dbReference>
<dbReference type="GO" id="GO:0031093">
    <property type="term" value="C:platelet alpha granule lumen"/>
    <property type="evidence" value="ECO:0000304"/>
    <property type="project" value="Reactome"/>
</dbReference>
<dbReference type="GO" id="GO:0002102">
    <property type="term" value="C:podosome"/>
    <property type="evidence" value="ECO:0000250"/>
    <property type="project" value="UniProtKB"/>
</dbReference>
<dbReference type="GO" id="GO:0005178">
    <property type="term" value="F:integrin binding"/>
    <property type="evidence" value="ECO:0000250"/>
    <property type="project" value="UniProtKB"/>
</dbReference>
<dbReference type="GO" id="GO:0008289">
    <property type="term" value="F:lipid binding"/>
    <property type="evidence" value="ECO:0000269"/>
    <property type="project" value="DisProt"/>
</dbReference>
<dbReference type="GO" id="GO:0007160">
    <property type="term" value="P:cell-matrix adhesion"/>
    <property type="evidence" value="ECO:0000318"/>
    <property type="project" value="GO_Central"/>
</dbReference>
<dbReference type="GO" id="GO:0033622">
    <property type="term" value="P:integrin activation"/>
    <property type="evidence" value="ECO:0000314"/>
    <property type="project" value="UniProtKB"/>
</dbReference>
<dbReference type="GO" id="GO:0007229">
    <property type="term" value="P:integrin-mediated signaling pathway"/>
    <property type="evidence" value="ECO:0000315"/>
    <property type="project" value="UniProtKB"/>
</dbReference>
<dbReference type="GO" id="GO:0007159">
    <property type="term" value="P:leukocyte cell-cell adhesion"/>
    <property type="evidence" value="ECO:0000315"/>
    <property type="project" value="UniProtKB"/>
</dbReference>
<dbReference type="GO" id="GO:0070527">
    <property type="term" value="P:platelet aggregation"/>
    <property type="evidence" value="ECO:0007001"/>
    <property type="project" value="UniProtKB"/>
</dbReference>
<dbReference type="GO" id="GO:0030335">
    <property type="term" value="P:positive regulation of cell migration"/>
    <property type="evidence" value="ECO:0000314"/>
    <property type="project" value="UniProtKB"/>
</dbReference>
<dbReference type="GO" id="GO:0033632">
    <property type="term" value="P:regulation of cell-cell adhesion mediated by integrin"/>
    <property type="evidence" value="ECO:0000314"/>
    <property type="project" value="UniProtKB"/>
</dbReference>
<dbReference type="GO" id="GO:0034446">
    <property type="term" value="P:substrate adhesion-dependent cell spreading"/>
    <property type="evidence" value="ECO:0000315"/>
    <property type="project" value="UniProtKB"/>
</dbReference>
<dbReference type="CDD" id="cd14473">
    <property type="entry name" value="FERM_B-lobe"/>
    <property type="match status" value="1"/>
</dbReference>
<dbReference type="CDD" id="cd13205">
    <property type="entry name" value="FERM_C_fermitin"/>
    <property type="match status" value="1"/>
</dbReference>
<dbReference type="CDD" id="cd17182">
    <property type="entry name" value="FERM_F0_KIND3"/>
    <property type="match status" value="1"/>
</dbReference>
<dbReference type="CDD" id="cd17185">
    <property type="entry name" value="FERM_F1_KIND3"/>
    <property type="match status" value="1"/>
</dbReference>
<dbReference type="CDD" id="cd01237">
    <property type="entry name" value="PH_fermitin"/>
    <property type="match status" value="1"/>
</dbReference>
<dbReference type="DisProt" id="DP01784"/>
<dbReference type="FunFam" id="2.30.29.30:FF:000037">
    <property type="entry name" value="Fermitin family homolog 2"/>
    <property type="match status" value="1"/>
</dbReference>
<dbReference type="FunFam" id="2.30.29.30:FF:000057">
    <property type="entry name" value="Fermitin family homolog 2 (Drosophila)"/>
    <property type="match status" value="1"/>
</dbReference>
<dbReference type="FunFam" id="3.10.20.90:FF:000035">
    <property type="entry name" value="Fermitin family homolog 2 (Drosophila)"/>
    <property type="match status" value="1"/>
</dbReference>
<dbReference type="Gene3D" id="3.10.20.90">
    <property type="entry name" value="Phosphatidylinositol 3-kinase Catalytic Subunit, Chain A, domain 1"/>
    <property type="match status" value="2"/>
</dbReference>
<dbReference type="Gene3D" id="2.30.29.30">
    <property type="entry name" value="Pleckstrin-homology domain (PH domain)/Phosphotyrosine-binding domain (PTB)"/>
    <property type="match status" value="2"/>
</dbReference>
<dbReference type="InterPro" id="IPR019749">
    <property type="entry name" value="Band_41_domain"/>
</dbReference>
<dbReference type="InterPro" id="IPR035963">
    <property type="entry name" value="FERM_2"/>
</dbReference>
<dbReference type="InterPro" id="IPR019748">
    <property type="entry name" value="FERM_central"/>
</dbReference>
<dbReference type="InterPro" id="IPR037843">
    <property type="entry name" value="Kindlin/fermitin"/>
</dbReference>
<dbReference type="InterPro" id="IPR040790">
    <property type="entry name" value="Kindlin_2_N"/>
</dbReference>
<dbReference type="InterPro" id="IPR011993">
    <property type="entry name" value="PH-like_dom_sf"/>
</dbReference>
<dbReference type="InterPro" id="IPR001849">
    <property type="entry name" value="PH_domain"/>
</dbReference>
<dbReference type="InterPro" id="IPR037837">
    <property type="entry name" value="PH_Kindlin/fermitin"/>
</dbReference>
<dbReference type="PANTHER" id="PTHR16160">
    <property type="entry name" value="FERMITIN 2-RELATED"/>
    <property type="match status" value="1"/>
</dbReference>
<dbReference type="PANTHER" id="PTHR16160:SF1">
    <property type="entry name" value="FERMITIN FAMILY HOMOLOG 3"/>
    <property type="match status" value="1"/>
</dbReference>
<dbReference type="Pfam" id="PF00373">
    <property type="entry name" value="FERM_M"/>
    <property type="match status" value="1"/>
</dbReference>
<dbReference type="Pfam" id="PF18124">
    <property type="entry name" value="Kindlin_2_N"/>
    <property type="match status" value="1"/>
</dbReference>
<dbReference type="Pfam" id="PF00169">
    <property type="entry name" value="PH"/>
    <property type="match status" value="1"/>
</dbReference>
<dbReference type="SMART" id="SM00295">
    <property type="entry name" value="B41"/>
    <property type="match status" value="1"/>
</dbReference>
<dbReference type="SMART" id="SM00233">
    <property type="entry name" value="PH"/>
    <property type="match status" value="1"/>
</dbReference>
<dbReference type="SUPFAM" id="SSF50729">
    <property type="entry name" value="PH domain-like"/>
    <property type="match status" value="2"/>
</dbReference>
<dbReference type="SUPFAM" id="SSF47031">
    <property type="entry name" value="Second domain of FERM"/>
    <property type="match status" value="2"/>
</dbReference>
<dbReference type="PROSITE" id="PS00661">
    <property type="entry name" value="FERM_2"/>
    <property type="match status" value="1"/>
</dbReference>
<dbReference type="PROSITE" id="PS50003">
    <property type="entry name" value="PH_DOMAIN"/>
    <property type="match status" value="1"/>
</dbReference>
<accession>Q86UX7</accession>
<accession>Q8IUA1</accession>
<accession>Q8N207</accession>
<accession>Q9BT48</accession>
<comment type="function">
    <text evidence="2 8 9 11">Plays a central role in cell adhesion in hematopoietic cells (PubMed:19234463, PubMed:26359933). Acts by activating the integrin beta-1-3 (ITGB1, ITGB2 and ITGB3) (By similarity). Required for integrin-mediated platelet adhesion and leukocyte adhesion to endothelial cells (PubMed:19234460). Required for activation of integrin beta-2 (ITGB2) in polymorphonuclear granulocytes (PMNs) (By similarity).</text>
</comment>
<comment type="function">
    <text evidence="7 8 9">Isoform 2 may act as a repressor of NF-kappa-B and apoptosis.</text>
</comment>
<comment type="subunit">
    <text evidence="1">Interacts with ITGB1, ITGB2 and ITGB3 (via cytoplasmic tails).</text>
</comment>
<comment type="interaction">
    <interactant intactId="EBI-12915620">
        <id>Q86UX7-2</id>
    </interactant>
    <interactant intactId="EBI-17439331">
        <id>Q8N6D5</id>
        <label>ANKRD29</label>
    </interactant>
    <organismsDiffer>false</organismsDiffer>
    <experiments>3</experiments>
</comment>
<comment type="interaction">
    <interactant intactId="EBI-12915620">
        <id>Q86UX7-2</id>
    </interactant>
    <interactant intactId="EBI-2798416">
        <id>Q99633</id>
        <label>PRPF18</label>
    </interactant>
    <organismsDiffer>false</organismsDiffer>
    <experiments>3</experiments>
</comment>
<comment type="subcellular location">
    <subcellularLocation>
        <location evidence="1">Cell projection</location>
        <location evidence="1">Podosome</location>
    </subcellularLocation>
    <text evidence="1">Present in the F-actin surrounding ring structure of podosomes, which are specialized adhesion structures of hematopoietic cells.</text>
</comment>
<comment type="alternative products">
    <event type="alternative splicing"/>
    <isoform>
        <id>Q86UX7-1</id>
        <name>1</name>
        <name>Long</name>
        <name>URP2LF</name>
        <sequence type="displayed"/>
    </isoform>
    <isoform>
        <id>Q86UX7-2</id>
        <name>2</name>
        <name>Short</name>
        <name>URP2SF</name>
        <sequence type="described" ref="VSP_009226"/>
    </isoform>
</comment>
<comment type="tissue specificity">
    <text evidence="4 5">Highly expressed in lymph node. Expressed in thymus, spleen and leukocytes. Weakly expressed in placenta, small intestine, stomach, testis and lung. Overexpressed in B-cell malignancies.</text>
</comment>
<comment type="domain">
    <text>The FERM domain is not correctly detected by PROSITE or Pfam techniques because it contains the insertion of a PH domain.</text>
</comment>
<comment type="disease" evidence="6 7 8 9 10 11">
    <disease id="DI-01898">
        <name>Leukocyte adhesion deficiency 3</name>
        <acronym>LAD3</acronym>
        <description>A disorder characterized by recurrent bacterial infections without pus formation, leukocytosis and major bleeding disorders.</description>
        <dbReference type="MIM" id="612840"/>
    </disease>
    <text>The disease is caused by variants affecting the gene represented in this entry.</text>
</comment>
<comment type="similarity">
    <text evidence="15">Belongs to the kindlin family.</text>
</comment>
<keyword id="KW-0002">3D-structure</keyword>
<keyword id="KW-0025">Alternative splicing</keyword>
<keyword id="KW-0130">Cell adhesion</keyword>
<keyword id="KW-0965">Cell junction</keyword>
<keyword id="KW-0966">Cell projection</keyword>
<keyword id="KW-0903">Direct protein sequencing</keyword>
<keyword id="KW-0225">Disease variant</keyword>
<keyword id="KW-0597">Phosphoprotein</keyword>
<keyword id="KW-1267">Proteomics identification</keyword>
<keyword id="KW-1185">Reference proteome</keyword>
<organism>
    <name type="scientific">Homo sapiens</name>
    <name type="common">Human</name>
    <dbReference type="NCBI Taxonomy" id="9606"/>
    <lineage>
        <taxon>Eukaryota</taxon>
        <taxon>Metazoa</taxon>
        <taxon>Chordata</taxon>
        <taxon>Craniata</taxon>
        <taxon>Vertebrata</taxon>
        <taxon>Euteleostomi</taxon>
        <taxon>Mammalia</taxon>
        <taxon>Eutheria</taxon>
        <taxon>Euarchontoglires</taxon>
        <taxon>Primates</taxon>
        <taxon>Haplorrhini</taxon>
        <taxon>Catarrhini</taxon>
        <taxon>Hominidae</taxon>
        <taxon>Homo</taxon>
    </lineage>
</organism>
<evidence type="ECO:0000250" key="1"/>
<evidence type="ECO:0000250" key="2">
    <source>
        <dbReference type="UniProtKB" id="Q8K1B8"/>
    </source>
</evidence>
<evidence type="ECO:0000255" key="3">
    <source>
        <dbReference type="PROSITE-ProRule" id="PRU00145"/>
    </source>
</evidence>
<evidence type="ECO:0000269" key="4">
    <source>
    </source>
</evidence>
<evidence type="ECO:0000269" key="5">
    <source>
    </source>
</evidence>
<evidence type="ECO:0000269" key="6">
    <source>
    </source>
</evidence>
<evidence type="ECO:0000269" key="7">
    <source>
    </source>
</evidence>
<evidence type="ECO:0000269" key="8">
    <source>
    </source>
</evidence>
<evidence type="ECO:0000269" key="9">
    <source>
    </source>
</evidence>
<evidence type="ECO:0000269" key="10">
    <source>
    </source>
</evidence>
<evidence type="ECO:0000269" key="11">
    <source>
    </source>
</evidence>
<evidence type="ECO:0000303" key="12">
    <source>
    </source>
</evidence>
<evidence type="ECO:0000303" key="13">
    <source>
    </source>
</evidence>
<evidence type="ECO:0000303" key="14">
    <source>
    </source>
</evidence>
<evidence type="ECO:0000305" key="15"/>
<evidence type="ECO:0007744" key="16">
    <source>
    </source>
</evidence>
<evidence type="ECO:0007744" key="17">
    <source>
    </source>
</evidence>
<evidence type="ECO:0007744" key="18">
    <source>
    </source>
</evidence>
<evidence type="ECO:0007829" key="19">
    <source>
        <dbReference type="PDB" id="2YS3"/>
    </source>
</evidence>
<evidence type="ECO:0007829" key="20">
    <source>
        <dbReference type="PDB" id="6V9G"/>
    </source>
</evidence>
<name>URP2_HUMAN</name>
<reference key="1">
    <citation type="journal article" date="2003" name="Biochim. Biophys. Acta">
        <title>URP1: a member of a novel family of PH and FERM domain-containing membrane-associated proteins is significantly over-expressed in lung and colon carcinomas.</title>
        <authorList>
            <person name="Weinstein E.J."/>
            <person name="Bourner M."/>
            <person name="Head R."/>
            <person name="Zakeri H."/>
            <person name="Bauer C."/>
            <person name="Mazzarella R."/>
        </authorList>
    </citation>
    <scope>NUCLEOTIDE SEQUENCE [MRNA] (ISOFORMS 1 AND 2)</scope>
    <scope>TISSUE SPECIFICITY</scope>
</reference>
<reference key="2">
    <citation type="journal article" date="2004" name="Nat. Genet.">
        <title>Complete sequencing and characterization of 21,243 full-length human cDNAs.</title>
        <authorList>
            <person name="Ota T."/>
            <person name="Suzuki Y."/>
            <person name="Nishikawa T."/>
            <person name="Otsuki T."/>
            <person name="Sugiyama T."/>
            <person name="Irie R."/>
            <person name="Wakamatsu A."/>
            <person name="Hayashi K."/>
            <person name="Sato H."/>
            <person name="Nagai K."/>
            <person name="Kimura K."/>
            <person name="Makita H."/>
            <person name="Sekine M."/>
            <person name="Obayashi M."/>
            <person name="Nishi T."/>
            <person name="Shibahara T."/>
            <person name="Tanaka T."/>
            <person name="Ishii S."/>
            <person name="Yamamoto J."/>
            <person name="Saito K."/>
            <person name="Kawai Y."/>
            <person name="Isono Y."/>
            <person name="Nakamura Y."/>
            <person name="Nagahari K."/>
            <person name="Murakami K."/>
            <person name="Yasuda T."/>
            <person name="Iwayanagi T."/>
            <person name="Wagatsuma M."/>
            <person name="Shiratori A."/>
            <person name="Sudo H."/>
            <person name="Hosoiri T."/>
            <person name="Kaku Y."/>
            <person name="Kodaira H."/>
            <person name="Kondo H."/>
            <person name="Sugawara M."/>
            <person name="Takahashi M."/>
            <person name="Kanda K."/>
            <person name="Yokoi T."/>
            <person name="Furuya T."/>
            <person name="Kikkawa E."/>
            <person name="Omura Y."/>
            <person name="Abe K."/>
            <person name="Kamihara K."/>
            <person name="Katsuta N."/>
            <person name="Sato K."/>
            <person name="Tanikawa M."/>
            <person name="Yamazaki M."/>
            <person name="Ninomiya K."/>
            <person name="Ishibashi T."/>
            <person name="Yamashita H."/>
            <person name="Murakawa K."/>
            <person name="Fujimori K."/>
            <person name="Tanai H."/>
            <person name="Kimata M."/>
            <person name="Watanabe M."/>
            <person name="Hiraoka S."/>
            <person name="Chiba Y."/>
            <person name="Ishida S."/>
            <person name="Ono Y."/>
            <person name="Takiguchi S."/>
            <person name="Watanabe S."/>
            <person name="Yosida M."/>
            <person name="Hotuta T."/>
            <person name="Kusano J."/>
            <person name="Kanehori K."/>
            <person name="Takahashi-Fujii A."/>
            <person name="Hara H."/>
            <person name="Tanase T.-O."/>
            <person name="Nomura Y."/>
            <person name="Togiya S."/>
            <person name="Komai F."/>
            <person name="Hara R."/>
            <person name="Takeuchi K."/>
            <person name="Arita M."/>
            <person name="Imose N."/>
            <person name="Musashino K."/>
            <person name="Yuuki H."/>
            <person name="Oshima A."/>
            <person name="Sasaki N."/>
            <person name="Aotsuka S."/>
            <person name="Yoshikawa Y."/>
            <person name="Matsunawa H."/>
            <person name="Ichihara T."/>
            <person name="Shiohata N."/>
            <person name="Sano S."/>
            <person name="Moriya S."/>
            <person name="Momiyama H."/>
            <person name="Satoh N."/>
            <person name="Takami S."/>
            <person name="Terashima Y."/>
            <person name="Suzuki O."/>
            <person name="Nakagawa S."/>
            <person name="Senoh A."/>
            <person name="Mizoguchi H."/>
            <person name="Goto Y."/>
            <person name="Shimizu F."/>
            <person name="Wakebe H."/>
            <person name="Hishigaki H."/>
            <person name="Watanabe T."/>
            <person name="Sugiyama A."/>
            <person name="Takemoto M."/>
            <person name="Kawakami B."/>
            <person name="Yamazaki M."/>
            <person name="Watanabe K."/>
            <person name="Kumagai A."/>
            <person name="Itakura S."/>
            <person name="Fukuzumi Y."/>
            <person name="Fujimori Y."/>
            <person name="Komiyama M."/>
            <person name="Tashiro H."/>
            <person name="Tanigami A."/>
            <person name="Fujiwara T."/>
            <person name="Ono T."/>
            <person name="Yamada K."/>
            <person name="Fujii Y."/>
            <person name="Ozaki K."/>
            <person name="Hirao M."/>
            <person name="Ohmori Y."/>
            <person name="Kawabata A."/>
            <person name="Hikiji T."/>
            <person name="Kobatake N."/>
            <person name="Inagaki H."/>
            <person name="Ikema Y."/>
            <person name="Okamoto S."/>
            <person name="Okitani R."/>
            <person name="Kawakami T."/>
            <person name="Noguchi S."/>
            <person name="Itoh T."/>
            <person name="Shigeta K."/>
            <person name="Senba T."/>
            <person name="Matsumura K."/>
            <person name="Nakajima Y."/>
            <person name="Mizuno T."/>
            <person name="Morinaga M."/>
            <person name="Sasaki M."/>
            <person name="Togashi T."/>
            <person name="Oyama M."/>
            <person name="Hata H."/>
            <person name="Watanabe M."/>
            <person name="Komatsu T."/>
            <person name="Mizushima-Sugano J."/>
            <person name="Satoh T."/>
            <person name="Shirai Y."/>
            <person name="Takahashi Y."/>
            <person name="Nakagawa K."/>
            <person name="Okumura K."/>
            <person name="Nagase T."/>
            <person name="Nomura N."/>
            <person name="Kikuchi H."/>
            <person name="Masuho Y."/>
            <person name="Yamashita R."/>
            <person name="Nakai K."/>
            <person name="Yada T."/>
            <person name="Nakamura Y."/>
            <person name="Ohara O."/>
            <person name="Isogai T."/>
            <person name="Sugano S."/>
        </authorList>
    </citation>
    <scope>NUCLEOTIDE SEQUENCE [LARGE SCALE MRNA] (ISOFORM 2)</scope>
    <source>
        <tissue>Thymus</tissue>
    </source>
</reference>
<reference key="3">
    <citation type="journal article" date="2004" name="Genome Res.">
        <title>The status, quality, and expansion of the NIH full-length cDNA project: the Mammalian Gene Collection (MGC).</title>
        <authorList>
            <consortium name="The MGC Project Team"/>
        </authorList>
    </citation>
    <scope>NUCLEOTIDE SEQUENCE [LARGE SCALE MRNA] (ISOFORM 2)</scope>
    <source>
        <tissue>Lung</tissue>
        <tissue>Lymph</tissue>
    </source>
</reference>
<reference key="4">
    <citation type="journal article" date="2003" name="Leukemia">
        <title>Proteomic analysis of the cell-surface membrane in chronic lymphocytic leukemia: identification of two novel proteins, BCNP1 and MIG2B.</title>
        <authorList>
            <person name="Boyd R.S."/>
            <person name="Adam P.J."/>
            <person name="Patel S."/>
            <person name="Loader J.A."/>
            <person name="Berry J."/>
            <person name="Redpath N.T."/>
            <person name="Poyser H.R."/>
            <person name="Fletcher G.C."/>
            <person name="Burgess N.A."/>
            <person name="Stamps A.C."/>
            <person name="Hudson L."/>
            <person name="Smith P."/>
            <person name="Griffiths M."/>
            <person name="Willis T.G."/>
            <person name="Karran E.L."/>
            <person name="Oscier D.G."/>
            <person name="Catovsky D."/>
            <person name="Terrett J.A."/>
            <person name="Dyer M.J.S."/>
        </authorList>
    </citation>
    <scope>PROTEIN SEQUENCE OF 20-35; 424-438 AND 569-577</scope>
    <scope>IDENTIFICATION BY MASS SPECTROMETRY</scope>
    <scope>SUBCELLULAR LOCATION</scope>
    <scope>TISSUE SPECIFICITY</scope>
</reference>
<reference key="5">
    <citation type="journal article" date="2008" name="Biochem. Biophys. Res. Commun.">
        <title>URP2SF, a FERM and PH domain containing protein, regulates NF-kappaB and apoptosis.</title>
        <authorList>
            <person name="Wang L."/>
            <person name="Deng W."/>
            <person name="Shi T."/>
            <person name="Ma D."/>
        </authorList>
    </citation>
    <scope>POSSIBLE FUNCTION (ISOFORM 2)</scope>
</reference>
<reference key="6">
    <citation type="journal article" date="2008" name="Blood">
        <title>Kindlin-3: a new gene involved in the pathogenesis of LAD-III.</title>
        <authorList>
            <person name="Mory A."/>
            <person name="Feigelson S.W."/>
            <person name="Yarali N."/>
            <person name="Kilic S.S."/>
            <person name="Bayhan G.I."/>
            <person name="Gershoni-Baruch R."/>
            <person name="Etzioni A."/>
            <person name="Alon R."/>
        </authorList>
    </citation>
    <scope>INVOLVEMENT IN LAD3</scope>
</reference>
<reference key="7">
    <citation type="journal article" date="2008" name="J. Proteome Res.">
        <title>Phosphoproteome of resting human platelets.</title>
        <authorList>
            <person name="Zahedi R.P."/>
            <person name="Lewandrowski U."/>
            <person name="Wiesner J."/>
            <person name="Wortelkamp S."/>
            <person name="Moebius J."/>
            <person name="Schuetz C."/>
            <person name="Walter U."/>
            <person name="Gambaryan S."/>
            <person name="Sickmann A."/>
        </authorList>
    </citation>
    <scope>PHOSPHORYLATION [LARGE SCALE ANALYSIS] AT TYR-11</scope>
    <scope>IDENTIFICATION BY MASS SPECTROMETRY [LARGE SCALE ANALYSIS]</scope>
    <source>
        <tissue>Platelet</tissue>
    </source>
</reference>
<reference key="8">
    <citation type="journal article" date="2009" name="Blood">
        <title>Loss of Kindlin-3 in LAD-III eliminates LFA-1 but not VLA-4 adhesiveness developed under shear flow conditions.</title>
        <authorList>
            <person name="Manevich-Mendelson E."/>
            <person name="Feigelson S.W."/>
            <person name="Pasvolsky R."/>
            <person name="Aker M."/>
            <person name="Grabovsky V."/>
            <person name="Shulman Z."/>
            <person name="Kilic S.S."/>
            <person name="Rosenthal-Allieri M.A."/>
            <person name="Ben-Dor S."/>
            <person name="Mory A."/>
            <person name="Bernard A."/>
            <person name="Moser M."/>
            <person name="Etzioni A."/>
            <person name="Alon R."/>
        </authorList>
    </citation>
    <scope>INVOLVEMENT IN LAD3</scope>
</reference>
<reference key="9">
    <citation type="journal article" date="2009" name="Blood">
        <title>LAD-1/variant syndrome is caused by mutations in FERMT3.</title>
        <authorList>
            <person name="Kuijpers T.W."/>
            <person name="van de Vijver E."/>
            <person name="Weterman M.A.J."/>
            <person name="de Boer M."/>
            <person name="Tool A.T.J."/>
            <person name="van den Berg T.K."/>
            <person name="Moser M."/>
            <person name="Jakobs M.E."/>
            <person name="Seeger K."/>
            <person name="Sanal O."/>
            <person name="Uenal S."/>
            <person name="Cetin M."/>
            <person name="Roos D."/>
            <person name="Verhoeven A.J."/>
            <person name="Baas F."/>
        </authorList>
    </citation>
    <scope>INVOLVEMENT IN LAD3</scope>
</reference>
<reference key="10">
    <citation type="journal article" date="2009" name="Nat. Med.">
        <title>Leukocyte adhesion deficiency-III is caused by mutations in KINDLIN3 affecting integrin activation.</title>
        <authorList>
            <person name="Svensson L."/>
            <person name="Howarth K."/>
            <person name="McDowall A."/>
            <person name="Patzak I."/>
            <person name="Evans R."/>
            <person name="Ussar S."/>
            <person name="Moser M."/>
            <person name="Metin A."/>
            <person name="Fried M."/>
            <person name="Tomlinson I."/>
            <person name="Hogg N."/>
        </authorList>
    </citation>
    <scope>INVOLVEMENT IN LAD3</scope>
    <scope>FUNCTION</scope>
</reference>
<reference key="11">
    <citation type="journal article" date="2009" name="Nat. Med.">
        <title>A point mutation in KINDLIN3 ablates activation of three integrin subfamilies in humans.</title>
        <authorList>
            <person name="Malinin N.L."/>
            <person name="Zhang L."/>
            <person name="Choi J."/>
            <person name="Ciocea A."/>
            <person name="Razorenova O."/>
            <person name="Ma Y.-Q."/>
            <person name="Podrez E.A."/>
            <person name="Tosi M."/>
            <person name="Lennon D.P."/>
            <person name="Caplan A.I."/>
            <person name="Shurin S.B."/>
            <person name="Plow E.F."/>
            <person name="Byzova T.V."/>
        </authorList>
    </citation>
    <scope>INVOLVEMENT IN LAD3</scope>
    <scope>FUNCTION</scope>
</reference>
<reference key="12">
    <citation type="journal article" date="2009" name="Sci. Signal.">
        <title>Quantitative phosphoproteomic analysis of T cell receptor signaling reveals system-wide modulation of protein-protein interactions.</title>
        <authorList>
            <person name="Mayya V."/>
            <person name="Lundgren D.H."/>
            <person name="Hwang S.-I."/>
            <person name="Rezaul K."/>
            <person name="Wu L."/>
            <person name="Eng J.K."/>
            <person name="Rodionov V."/>
            <person name="Han D.K."/>
        </authorList>
    </citation>
    <scope>PHOSPHORYLATION [LARGE SCALE ANALYSIS] AT TYR-11 AND TYR-504</scope>
    <scope>IDENTIFICATION BY MASS SPECTROMETRY [LARGE SCALE ANALYSIS]</scope>
    <source>
        <tissue>Leukemic T-cell</tissue>
    </source>
</reference>
<reference key="13">
    <citation type="journal article" date="2011" name="BMC Syst. Biol.">
        <title>Initial characterization of the human central proteome.</title>
        <authorList>
            <person name="Burkard T.R."/>
            <person name="Planyavsky M."/>
            <person name="Kaupe I."/>
            <person name="Breitwieser F.P."/>
            <person name="Buerckstuemmer T."/>
            <person name="Bennett K.L."/>
            <person name="Superti-Furga G."/>
            <person name="Colinge J."/>
        </authorList>
    </citation>
    <scope>IDENTIFICATION BY MASS SPECTROMETRY [LARGE SCALE ANALYSIS]</scope>
</reference>
<reference key="14">
    <citation type="journal article" date="2013" name="J. Proteome Res.">
        <title>Toward a comprehensive characterization of a human cancer cell phosphoproteome.</title>
        <authorList>
            <person name="Zhou H."/>
            <person name="Di Palma S."/>
            <person name="Preisinger C."/>
            <person name="Peng M."/>
            <person name="Polat A.N."/>
            <person name="Heck A.J."/>
            <person name="Mohammed S."/>
        </authorList>
    </citation>
    <scope>PHOSPHORYLATION [LARGE SCALE ANALYSIS] AT SER-8 AND THR-591</scope>
    <scope>IDENTIFICATION BY MASS SPECTROMETRY [LARGE SCALE ANALYSIS]</scope>
    <source>
        <tissue>Erythroleukemia</tissue>
    </source>
</reference>
<reference key="15">
    <citation type="journal article" date="2015" name="Proteomics">
        <title>N-terminome analysis of the human mitochondrial proteome.</title>
        <authorList>
            <person name="Vaca Jacome A.S."/>
            <person name="Rabilloud T."/>
            <person name="Schaeffer-Reiss C."/>
            <person name="Rompais M."/>
            <person name="Ayoub D."/>
            <person name="Lane L."/>
            <person name="Bairoch A."/>
            <person name="Van Dorsselaer A."/>
            <person name="Carapito C."/>
        </authorList>
    </citation>
    <scope>IDENTIFICATION BY MASS SPECTROMETRY [LARGE SCALE ANALYSIS]</scope>
</reference>
<reference key="16">
    <citation type="submission" date="2009-02" db="PDB data bank">
        <title>Solution structure of the PH domain of kindlin-3 from human.</title>
        <authorList>
            <consortium name="RIKEN structural genomics initiative (RSGI)"/>
        </authorList>
    </citation>
    <scope>STRUCTURE BY NMR OF 349-478</scope>
</reference>
<reference key="17">
    <citation type="journal article" date="2016" name="Pediatr. Allergy Immunol.">
        <title>Adaptive immune defects in a patient with leukocyte adhesion deficiency type III with a novel mutation in FERMT3.</title>
        <authorList>
            <person name="Suratannon N."/>
            <person name="Yeetong P."/>
            <person name="Srichomthong C."/>
            <person name="Amarinthnukrowh P."/>
            <person name="Chatchatee P."/>
            <person name="Sosothikul D."/>
            <person name="van Hagen P.M."/>
            <person name="van der Burg M."/>
            <person name="Wentink M."/>
            <person name="Driessen G.J."/>
            <person name="Suphapeetiporn K."/>
            <person name="Shotelersuk V."/>
        </authorList>
    </citation>
    <scope>VARIANT LAD3 SER-599</scope>
    <scope>CHARACTERIZATION OF VARIANT LAD3 SER-599</scope>
    <scope>FUNCTION</scope>
</reference>